<evidence type="ECO:0000255" key="1">
    <source>
        <dbReference type="HAMAP-Rule" id="MF_00451"/>
    </source>
</evidence>
<gene>
    <name evidence="1" type="primary">ndk</name>
    <name type="ordered locus">DP1948</name>
</gene>
<proteinExistence type="inferred from homology"/>
<comment type="function">
    <text evidence="1">Major role in the synthesis of nucleoside triphosphates other than ATP. The ATP gamma phosphate is transferred to the NDP beta phosphate via a ping-pong mechanism, using a phosphorylated active-site intermediate.</text>
</comment>
<comment type="catalytic activity">
    <reaction evidence="1">
        <text>a 2'-deoxyribonucleoside 5'-diphosphate + ATP = a 2'-deoxyribonucleoside 5'-triphosphate + ADP</text>
        <dbReference type="Rhea" id="RHEA:44640"/>
        <dbReference type="ChEBI" id="CHEBI:30616"/>
        <dbReference type="ChEBI" id="CHEBI:61560"/>
        <dbReference type="ChEBI" id="CHEBI:73316"/>
        <dbReference type="ChEBI" id="CHEBI:456216"/>
        <dbReference type="EC" id="2.7.4.6"/>
    </reaction>
</comment>
<comment type="catalytic activity">
    <reaction evidence="1">
        <text>a ribonucleoside 5'-diphosphate + ATP = a ribonucleoside 5'-triphosphate + ADP</text>
        <dbReference type="Rhea" id="RHEA:18113"/>
        <dbReference type="ChEBI" id="CHEBI:30616"/>
        <dbReference type="ChEBI" id="CHEBI:57930"/>
        <dbReference type="ChEBI" id="CHEBI:61557"/>
        <dbReference type="ChEBI" id="CHEBI:456216"/>
        <dbReference type="EC" id="2.7.4.6"/>
    </reaction>
</comment>
<comment type="cofactor">
    <cofactor evidence="1">
        <name>Mg(2+)</name>
        <dbReference type="ChEBI" id="CHEBI:18420"/>
    </cofactor>
</comment>
<comment type="subunit">
    <text evidence="1">Homotetramer.</text>
</comment>
<comment type="subcellular location">
    <subcellularLocation>
        <location evidence="1">Cytoplasm</location>
    </subcellularLocation>
</comment>
<comment type="similarity">
    <text evidence="1">Belongs to the NDK family.</text>
</comment>
<name>NDK_DESPS</name>
<reference key="1">
    <citation type="journal article" date="2004" name="Environ. Microbiol.">
        <title>The genome of Desulfotalea psychrophila, a sulfate-reducing bacterium from permanently cold Arctic sediments.</title>
        <authorList>
            <person name="Rabus R."/>
            <person name="Ruepp A."/>
            <person name="Frickey T."/>
            <person name="Rattei T."/>
            <person name="Fartmann B."/>
            <person name="Stark M."/>
            <person name="Bauer M."/>
            <person name="Zibat A."/>
            <person name="Lombardot T."/>
            <person name="Becker I."/>
            <person name="Amann J."/>
            <person name="Gellner K."/>
            <person name="Teeling H."/>
            <person name="Leuschner W.D."/>
            <person name="Gloeckner F.-O."/>
            <person name="Lupas A.N."/>
            <person name="Amann R."/>
            <person name="Klenk H.-P."/>
        </authorList>
    </citation>
    <scope>NUCLEOTIDE SEQUENCE [LARGE SCALE GENOMIC DNA]</scope>
    <source>
        <strain>DSM 12343 / LSv54</strain>
    </source>
</reference>
<dbReference type="EC" id="2.7.4.6" evidence="1"/>
<dbReference type="EMBL" id="CR522870">
    <property type="protein sequence ID" value="CAG36677.1"/>
    <property type="molecule type" value="Genomic_DNA"/>
</dbReference>
<dbReference type="RefSeq" id="WP_011189189.1">
    <property type="nucleotide sequence ID" value="NC_006138.1"/>
</dbReference>
<dbReference type="SMR" id="Q6ALU8"/>
<dbReference type="STRING" id="177439.DP1948"/>
<dbReference type="KEGG" id="dps:DP1948"/>
<dbReference type="eggNOG" id="COG0105">
    <property type="taxonomic scope" value="Bacteria"/>
</dbReference>
<dbReference type="HOGENOM" id="CLU_060216_8_1_7"/>
<dbReference type="OrthoDB" id="9801161at2"/>
<dbReference type="Proteomes" id="UP000000602">
    <property type="component" value="Chromosome"/>
</dbReference>
<dbReference type="GO" id="GO:0005737">
    <property type="term" value="C:cytoplasm"/>
    <property type="evidence" value="ECO:0007669"/>
    <property type="project" value="UniProtKB-SubCell"/>
</dbReference>
<dbReference type="GO" id="GO:0005524">
    <property type="term" value="F:ATP binding"/>
    <property type="evidence" value="ECO:0007669"/>
    <property type="project" value="UniProtKB-UniRule"/>
</dbReference>
<dbReference type="GO" id="GO:0046872">
    <property type="term" value="F:metal ion binding"/>
    <property type="evidence" value="ECO:0007669"/>
    <property type="project" value="UniProtKB-KW"/>
</dbReference>
<dbReference type="GO" id="GO:0004550">
    <property type="term" value="F:nucleoside diphosphate kinase activity"/>
    <property type="evidence" value="ECO:0007669"/>
    <property type="project" value="UniProtKB-UniRule"/>
</dbReference>
<dbReference type="GO" id="GO:0006241">
    <property type="term" value="P:CTP biosynthetic process"/>
    <property type="evidence" value="ECO:0007669"/>
    <property type="project" value="UniProtKB-UniRule"/>
</dbReference>
<dbReference type="GO" id="GO:0006183">
    <property type="term" value="P:GTP biosynthetic process"/>
    <property type="evidence" value="ECO:0007669"/>
    <property type="project" value="UniProtKB-UniRule"/>
</dbReference>
<dbReference type="GO" id="GO:0006228">
    <property type="term" value="P:UTP biosynthetic process"/>
    <property type="evidence" value="ECO:0007669"/>
    <property type="project" value="UniProtKB-UniRule"/>
</dbReference>
<dbReference type="CDD" id="cd04413">
    <property type="entry name" value="NDPk_I"/>
    <property type="match status" value="1"/>
</dbReference>
<dbReference type="Gene3D" id="3.30.70.141">
    <property type="entry name" value="Nucleoside diphosphate kinase-like domain"/>
    <property type="match status" value="1"/>
</dbReference>
<dbReference type="HAMAP" id="MF_00451">
    <property type="entry name" value="NDP_kinase"/>
    <property type="match status" value="1"/>
</dbReference>
<dbReference type="InterPro" id="IPR034907">
    <property type="entry name" value="NDK-like_dom"/>
</dbReference>
<dbReference type="InterPro" id="IPR036850">
    <property type="entry name" value="NDK-like_dom_sf"/>
</dbReference>
<dbReference type="InterPro" id="IPR001564">
    <property type="entry name" value="Nucleoside_diP_kinase"/>
</dbReference>
<dbReference type="InterPro" id="IPR023005">
    <property type="entry name" value="Nucleoside_diP_kinase_AS"/>
</dbReference>
<dbReference type="NCBIfam" id="NF001908">
    <property type="entry name" value="PRK00668.1"/>
    <property type="match status" value="1"/>
</dbReference>
<dbReference type="PANTHER" id="PTHR46161">
    <property type="entry name" value="NUCLEOSIDE DIPHOSPHATE KINASE"/>
    <property type="match status" value="1"/>
</dbReference>
<dbReference type="PANTHER" id="PTHR46161:SF3">
    <property type="entry name" value="NUCLEOSIDE DIPHOSPHATE KINASE DDB_G0292928-RELATED"/>
    <property type="match status" value="1"/>
</dbReference>
<dbReference type="Pfam" id="PF00334">
    <property type="entry name" value="NDK"/>
    <property type="match status" value="1"/>
</dbReference>
<dbReference type="PRINTS" id="PR01243">
    <property type="entry name" value="NUCDPKINASE"/>
</dbReference>
<dbReference type="SMART" id="SM00562">
    <property type="entry name" value="NDK"/>
    <property type="match status" value="1"/>
</dbReference>
<dbReference type="SUPFAM" id="SSF54919">
    <property type="entry name" value="Nucleoside diphosphate kinase, NDK"/>
    <property type="match status" value="1"/>
</dbReference>
<dbReference type="PROSITE" id="PS00469">
    <property type="entry name" value="NDPK"/>
    <property type="match status" value="1"/>
</dbReference>
<dbReference type="PROSITE" id="PS51374">
    <property type="entry name" value="NDPK_LIKE"/>
    <property type="match status" value="1"/>
</dbReference>
<feature type="chain" id="PRO_0000136976" description="Nucleoside diphosphate kinase">
    <location>
        <begin position="1"/>
        <end position="137"/>
    </location>
</feature>
<feature type="active site" description="Pros-phosphohistidine intermediate" evidence="1">
    <location>
        <position position="115"/>
    </location>
</feature>
<feature type="binding site" evidence="1">
    <location>
        <position position="9"/>
    </location>
    <ligand>
        <name>ATP</name>
        <dbReference type="ChEBI" id="CHEBI:30616"/>
    </ligand>
</feature>
<feature type="binding site" evidence="1">
    <location>
        <position position="57"/>
    </location>
    <ligand>
        <name>ATP</name>
        <dbReference type="ChEBI" id="CHEBI:30616"/>
    </ligand>
</feature>
<feature type="binding site" evidence="1">
    <location>
        <position position="85"/>
    </location>
    <ligand>
        <name>ATP</name>
        <dbReference type="ChEBI" id="CHEBI:30616"/>
    </ligand>
</feature>
<feature type="binding site" evidence="1">
    <location>
        <position position="91"/>
    </location>
    <ligand>
        <name>ATP</name>
        <dbReference type="ChEBI" id="CHEBI:30616"/>
    </ligand>
</feature>
<feature type="binding site" evidence="1">
    <location>
        <position position="102"/>
    </location>
    <ligand>
        <name>ATP</name>
        <dbReference type="ChEBI" id="CHEBI:30616"/>
    </ligand>
</feature>
<feature type="binding site" evidence="1">
    <location>
        <position position="112"/>
    </location>
    <ligand>
        <name>ATP</name>
        <dbReference type="ChEBI" id="CHEBI:30616"/>
    </ligand>
</feature>
<organism>
    <name type="scientific">Desulfotalea psychrophila (strain LSv54 / DSM 12343)</name>
    <dbReference type="NCBI Taxonomy" id="177439"/>
    <lineage>
        <taxon>Bacteria</taxon>
        <taxon>Pseudomonadati</taxon>
        <taxon>Thermodesulfobacteriota</taxon>
        <taxon>Desulfobulbia</taxon>
        <taxon>Desulfobulbales</taxon>
        <taxon>Desulfocapsaceae</taxon>
        <taxon>Desulfotalea</taxon>
    </lineage>
</organism>
<accession>Q6ALU8</accession>
<sequence length="137" mass="14884">MEKTFAIIKPDAFAAGNAGKILARIYQEGFTVIGLKKLCMSQREAEGFYAVHNKKPFFAELTKFMSSGPCIVMVLEAEGCIGKWRDLMGATNPADAKPGSLRREFGTIVGENATHGSDAPETAAVELEYFFSGLELL</sequence>
<protein>
    <recommendedName>
        <fullName evidence="1">Nucleoside diphosphate kinase</fullName>
        <shortName evidence="1">NDK</shortName>
        <shortName evidence="1">NDP kinase</shortName>
        <ecNumber evidence="1">2.7.4.6</ecNumber>
    </recommendedName>
    <alternativeName>
        <fullName evidence="1">Nucleoside-2-P kinase</fullName>
    </alternativeName>
</protein>
<keyword id="KW-0067">ATP-binding</keyword>
<keyword id="KW-0963">Cytoplasm</keyword>
<keyword id="KW-0418">Kinase</keyword>
<keyword id="KW-0460">Magnesium</keyword>
<keyword id="KW-0479">Metal-binding</keyword>
<keyword id="KW-0546">Nucleotide metabolism</keyword>
<keyword id="KW-0547">Nucleotide-binding</keyword>
<keyword id="KW-0597">Phosphoprotein</keyword>
<keyword id="KW-1185">Reference proteome</keyword>
<keyword id="KW-0808">Transferase</keyword>